<proteinExistence type="inferred from homology"/>
<keyword id="KW-1185">Reference proteome</keyword>
<keyword id="KW-0678">Repressor</keyword>
<keyword id="KW-0687">Ribonucleoprotein</keyword>
<keyword id="KW-0689">Ribosomal protein</keyword>
<keyword id="KW-0694">RNA-binding</keyword>
<keyword id="KW-0699">rRNA-binding</keyword>
<keyword id="KW-0810">Translation regulation</keyword>
<keyword id="KW-0820">tRNA-binding</keyword>
<name>RL1_SHEWM</name>
<organism>
    <name type="scientific">Shewanella woodyi (strain ATCC 51908 / MS32)</name>
    <dbReference type="NCBI Taxonomy" id="392500"/>
    <lineage>
        <taxon>Bacteria</taxon>
        <taxon>Pseudomonadati</taxon>
        <taxon>Pseudomonadota</taxon>
        <taxon>Gammaproteobacteria</taxon>
        <taxon>Alteromonadales</taxon>
        <taxon>Shewanellaceae</taxon>
        <taxon>Shewanella</taxon>
    </lineage>
</organism>
<sequence>MAKLTKRARLIREKVEVTKNYDINEAVALLKELATAKFVESVDVAVNLGVDPRKSDQNVRGATVLPHGTGREVRVAVFTQGANAEAATAAGAELVGMDELAAQVKAGEMNFDVVIASPDAMRVVGQLGQILGPRGLMPNPKTGTVTPNVAEAVKNAKAGQVRYRTDKNGIIHTTIGKVDFETVQLKENLEALIGALVKAKPASAKGVFLKKVSISTTMGAGVAVDQATLAKAL</sequence>
<reference key="1">
    <citation type="submission" date="2008-02" db="EMBL/GenBank/DDBJ databases">
        <title>Complete sequence of Shewanella woodyi ATCC 51908.</title>
        <authorList>
            <consortium name="US DOE Joint Genome Institute"/>
            <person name="Copeland A."/>
            <person name="Lucas S."/>
            <person name="Lapidus A."/>
            <person name="Glavina del Rio T."/>
            <person name="Dalin E."/>
            <person name="Tice H."/>
            <person name="Bruce D."/>
            <person name="Goodwin L."/>
            <person name="Pitluck S."/>
            <person name="Sims D."/>
            <person name="Brettin T."/>
            <person name="Detter J.C."/>
            <person name="Han C."/>
            <person name="Kuske C.R."/>
            <person name="Schmutz J."/>
            <person name="Larimer F."/>
            <person name="Land M."/>
            <person name="Hauser L."/>
            <person name="Kyrpides N."/>
            <person name="Lykidis A."/>
            <person name="Zhao J.-S."/>
            <person name="Richardson P."/>
        </authorList>
    </citation>
    <scope>NUCLEOTIDE SEQUENCE [LARGE SCALE GENOMIC DNA]</scope>
    <source>
        <strain>ATCC 51908 / MS32</strain>
    </source>
</reference>
<dbReference type="EMBL" id="CP000961">
    <property type="protein sequence ID" value="ACA88950.1"/>
    <property type="molecule type" value="Genomic_DNA"/>
</dbReference>
<dbReference type="RefSeq" id="WP_012327269.1">
    <property type="nucleotide sequence ID" value="NC_010506.1"/>
</dbReference>
<dbReference type="SMR" id="B1KMZ3"/>
<dbReference type="STRING" id="392500.Swoo_4700"/>
<dbReference type="KEGG" id="swd:Swoo_4700"/>
<dbReference type="eggNOG" id="COG0081">
    <property type="taxonomic scope" value="Bacteria"/>
</dbReference>
<dbReference type="HOGENOM" id="CLU_062853_0_0_6"/>
<dbReference type="Proteomes" id="UP000002168">
    <property type="component" value="Chromosome"/>
</dbReference>
<dbReference type="GO" id="GO:0022625">
    <property type="term" value="C:cytosolic large ribosomal subunit"/>
    <property type="evidence" value="ECO:0007669"/>
    <property type="project" value="TreeGrafter"/>
</dbReference>
<dbReference type="GO" id="GO:0019843">
    <property type="term" value="F:rRNA binding"/>
    <property type="evidence" value="ECO:0007669"/>
    <property type="project" value="UniProtKB-UniRule"/>
</dbReference>
<dbReference type="GO" id="GO:0003735">
    <property type="term" value="F:structural constituent of ribosome"/>
    <property type="evidence" value="ECO:0007669"/>
    <property type="project" value="InterPro"/>
</dbReference>
<dbReference type="GO" id="GO:0000049">
    <property type="term" value="F:tRNA binding"/>
    <property type="evidence" value="ECO:0007669"/>
    <property type="project" value="UniProtKB-KW"/>
</dbReference>
<dbReference type="GO" id="GO:0006417">
    <property type="term" value="P:regulation of translation"/>
    <property type="evidence" value="ECO:0007669"/>
    <property type="project" value="UniProtKB-KW"/>
</dbReference>
<dbReference type="GO" id="GO:0006412">
    <property type="term" value="P:translation"/>
    <property type="evidence" value="ECO:0007669"/>
    <property type="project" value="UniProtKB-UniRule"/>
</dbReference>
<dbReference type="CDD" id="cd00403">
    <property type="entry name" value="Ribosomal_L1"/>
    <property type="match status" value="1"/>
</dbReference>
<dbReference type="FunFam" id="3.40.50.790:FF:000001">
    <property type="entry name" value="50S ribosomal protein L1"/>
    <property type="match status" value="1"/>
</dbReference>
<dbReference type="Gene3D" id="3.30.190.20">
    <property type="match status" value="1"/>
</dbReference>
<dbReference type="Gene3D" id="3.40.50.790">
    <property type="match status" value="1"/>
</dbReference>
<dbReference type="HAMAP" id="MF_01318_B">
    <property type="entry name" value="Ribosomal_uL1_B"/>
    <property type="match status" value="1"/>
</dbReference>
<dbReference type="InterPro" id="IPR005878">
    <property type="entry name" value="Ribosom_uL1_bac-type"/>
</dbReference>
<dbReference type="InterPro" id="IPR002143">
    <property type="entry name" value="Ribosomal_uL1"/>
</dbReference>
<dbReference type="InterPro" id="IPR023674">
    <property type="entry name" value="Ribosomal_uL1-like"/>
</dbReference>
<dbReference type="InterPro" id="IPR028364">
    <property type="entry name" value="Ribosomal_uL1/biogenesis"/>
</dbReference>
<dbReference type="InterPro" id="IPR016095">
    <property type="entry name" value="Ribosomal_uL1_3-a/b-sand"/>
</dbReference>
<dbReference type="InterPro" id="IPR023673">
    <property type="entry name" value="Ribosomal_uL1_CS"/>
</dbReference>
<dbReference type="NCBIfam" id="TIGR01169">
    <property type="entry name" value="rplA_bact"/>
    <property type="match status" value="1"/>
</dbReference>
<dbReference type="PANTHER" id="PTHR36427">
    <property type="entry name" value="54S RIBOSOMAL PROTEIN L1, MITOCHONDRIAL"/>
    <property type="match status" value="1"/>
</dbReference>
<dbReference type="PANTHER" id="PTHR36427:SF3">
    <property type="entry name" value="LARGE RIBOSOMAL SUBUNIT PROTEIN UL1M"/>
    <property type="match status" value="1"/>
</dbReference>
<dbReference type="Pfam" id="PF00687">
    <property type="entry name" value="Ribosomal_L1"/>
    <property type="match status" value="1"/>
</dbReference>
<dbReference type="PIRSF" id="PIRSF002155">
    <property type="entry name" value="Ribosomal_L1"/>
    <property type="match status" value="1"/>
</dbReference>
<dbReference type="SUPFAM" id="SSF56808">
    <property type="entry name" value="Ribosomal protein L1"/>
    <property type="match status" value="1"/>
</dbReference>
<dbReference type="PROSITE" id="PS01199">
    <property type="entry name" value="RIBOSOMAL_L1"/>
    <property type="match status" value="1"/>
</dbReference>
<gene>
    <name evidence="1" type="primary">rplA</name>
    <name type="ordered locus">Swoo_4700</name>
</gene>
<feature type="chain" id="PRO_1000141461" description="Large ribosomal subunit protein uL1">
    <location>
        <begin position="1"/>
        <end position="233"/>
    </location>
</feature>
<evidence type="ECO:0000255" key="1">
    <source>
        <dbReference type="HAMAP-Rule" id="MF_01318"/>
    </source>
</evidence>
<evidence type="ECO:0000305" key="2"/>
<accession>B1KMZ3</accession>
<comment type="function">
    <text evidence="1">Binds directly to 23S rRNA. The L1 stalk is quite mobile in the ribosome, and is involved in E site tRNA release.</text>
</comment>
<comment type="function">
    <text evidence="1">Protein L1 is also a translational repressor protein, it controls the translation of the L11 operon by binding to its mRNA.</text>
</comment>
<comment type="subunit">
    <text evidence="1">Part of the 50S ribosomal subunit.</text>
</comment>
<comment type="similarity">
    <text evidence="1">Belongs to the universal ribosomal protein uL1 family.</text>
</comment>
<protein>
    <recommendedName>
        <fullName evidence="1">Large ribosomal subunit protein uL1</fullName>
    </recommendedName>
    <alternativeName>
        <fullName evidence="2">50S ribosomal protein L1</fullName>
    </alternativeName>
</protein>